<proteinExistence type="evidence at transcript level"/>
<name>RAB7B_BOVIN</name>
<organism>
    <name type="scientific">Bos taurus</name>
    <name type="common">Bovine</name>
    <dbReference type="NCBI Taxonomy" id="9913"/>
    <lineage>
        <taxon>Eukaryota</taxon>
        <taxon>Metazoa</taxon>
        <taxon>Chordata</taxon>
        <taxon>Craniata</taxon>
        <taxon>Vertebrata</taxon>
        <taxon>Euteleostomi</taxon>
        <taxon>Mammalia</taxon>
        <taxon>Eutheria</taxon>
        <taxon>Laurasiatheria</taxon>
        <taxon>Artiodactyla</taxon>
        <taxon>Ruminantia</taxon>
        <taxon>Pecora</taxon>
        <taxon>Bovidae</taxon>
        <taxon>Bovinae</taxon>
        <taxon>Bos</taxon>
    </lineage>
</organism>
<reference key="1">
    <citation type="submission" date="2006-09" db="EMBL/GenBank/DDBJ databases">
        <authorList>
            <consortium name="NIH - Mammalian Gene Collection (MGC) project"/>
        </authorList>
    </citation>
    <scope>NUCLEOTIDE SEQUENCE [LARGE SCALE MRNA]</scope>
    <source>
        <strain>Hereford</strain>
        <tissue>Fetal skin</tissue>
    </source>
</reference>
<gene>
    <name type="primary">RAB7B</name>
</gene>
<feature type="chain" id="PRO_0000312560" description="Ras-related protein Rab-7b">
    <location>
        <begin position="1"/>
        <end position="200"/>
    </location>
</feature>
<feature type="short sequence motif" description="Switch 1" evidence="2">
    <location>
        <begin position="28"/>
        <end position="41"/>
    </location>
</feature>
<feature type="short sequence motif" description="Switch 2" evidence="2">
    <location>
        <begin position="67"/>
        <end position="82"/>
    </location>
</feature>
<feature type="binding site" evidence="1">
    <location>
        <begin position="15"/>
        <end position="22"/>
    </location>
    <ligand>
        <name>GTP</name>
        <dbReference type="ChEBI" id="CHEBI:37565"/>
    </ligand>
</feature>
<feature type="binding site" evidence="1">
    <location>
        <begin position="34"/>
        <end position="40"/>
    </location>
    <ligand>
        <name>GTP</name>
        <dbReference type="ChEBI" id="CHEBI:37565"/>
    </ligand>
</feature>
<feature type="binding site" evidence="1">
    <location>
        <begin position="63"/>
        <end position="67"/>
    </location>
    <ligand>
        <name>GTP</name>
        <dbReference type="ChEBI" id="CHEBI:37565"/>
    </ligand>
</feature>
<feature type="binding site" evidence="1">
    <location>
        <begin position="124"/>
        <end position="127"/>
    </location>
    <ligand>
        <name>GTP</name>
        <dbReference type="ChEBI" id="CHEBI:37565"/>
    </ligand>
</feature>
<feature type="binding site" evidence="1">
    <location>
        <begin position="154"/>
        <end position="155"/>
    </location>
    <ligand>
        <name>GTP</name>
        <dbReference type="ChEBI" id="CHEBI:37565"/>
    </ligand>
</feature>
<feature type="modified residue" description="Phosphoserine" evidence="3">
    <location>
        <position position="186"/>
    </location>
</feature>
<feature type="lipid moiety-binding region" description="S-geranylgeranyl cysteine" evidence="1">
    <location>
        <position position="199"/>
    </location>
</feature>
<feature type="lipid moiety-binding region" description="S-geranylgeranyl cysteine" evidence="1">
    <location>
        <position position="200"/>
    </location>
</feature>
<evidence type="ECO:0000250" key="1"/>
<evidence type="ECO:0000250" key="2">
    <source>
        <dbReference type="UniProtKB" id="P51149"/>
    </source>
</evidence>
<evidence type="ECO:0000250" key="3">
    <source>
        <dbReference type="UniProtKB" id="Q8VEA8"/>
    </source>
</evidence>
<evidence type="ECO:0000250" key="4">
    <source>
        <dbReference type="UniProtKB" id="Q96AH8"/>
    </source>
</evidence>
<evidence type="ECO:0000305" key="5"/>
<accession>Q08DE8</accession>
<comment type="function">
    <text evidence="1">Controls vesicular trafficking from endosomes to the trans-Golgi network (TGN). Acts as a negative regulator of TLR9 signaling and can suppress TLR9-triggered TNFA, IL6, and IFNB production in macrophages by promoting TLR9 lysosomal degradation. Also negatively regulates TLR4 signaling in macrophages by promoting lysosomal degradation of TLR4. Promotes megakaryocytic differentiation by increasing NF-kappa-B-dependent IL6 production and subsequently enhancing the association of STAT3 with GATA1. Not involved in the regulation of the EGF- and EGFR degradation pathway (By similarity).</text>
</comment>
<comment type="subcellular location">
    <subcellularLocation>
        <location evidence="4">Late endosome</location>
    </subcellularLocation>
    <subcellularLocation>
        <location evidence="4">Lysosome</location>
    </subcellularLocation>
    <subcellularLocation>
        <location evidence="4">Golgi apparatus</location>
    </subcellularLocation>
    <subcellularLocation>
        <location evidence="4">Golgi apparatus</location>
        <location evidence="4">trans-Golgi network</location>
    </subcellularLocation>
    <subcellularLocation>
        <location evidence="4">Cytoplasmic vesicle</location>
        <location evidence="4">Phagosome</location>
    </subcellularLocation>
    <subcellularLocation>
        <location evidence="5">Cytoplasmic vesicle</location>
        <location evidence="5">Phagosome membrane</location>
        <topology evidence="5">Lipid-anchor</topology>
        <orientation evidence="5">Cytoplasmic side</orientation>
    </subcellularLocation>
    <text evidence="4">Recruited to phagosomes containing S.aureus or M.tuberculosis.</text>
</comment>
<comment type="domain">
    <text evidence="2">Switch 1, switch 2 and the interswitch regions are characteristic of Rab GTPases and mediate the interactions with Rab downstream effectors. The switch regions undergo conformational changes upon nucleotide binding which drive interaction with specific sets of effector proteins, with most effectors only binding to GTP-bound Rab.</text>
</comment>
<comment type="similarity">
    <text evidence="5">Belongs to the small GTPase superfamily. Rab family.</text>
</comment>
<dbReference type="EMBL" id="BC123789">
    <property type="protein sequence ID" value="AAI23790.1"/>
    <property type="molecule type" value="mRNA"/>
</dbReference>
<dbReference type="RefSeq" id="NP_001071481.1">
    <property type="nucleotide sequence ID" value="NM_001078013.1"/>
</dbReference>
<dbReference type="RefSeq" id="XP_005216746.1">
    <property type="nucleotide sequence ID" value="XM_005216689.3"/>
</dbReference>
<dbReference type="SMR" id="Q08DE8"/>
<dbReference type="FunCoup" id="Q08DE8">
    <property type="interactions" value="277"/>
</dbReference>
<dbReference type="STRING" id="9913.ENSBTAP00000016976"/>
<dbReference type="PaxDb" id="9913-ENSBTAP00000016976"/>
<dbReference type="Ensembl" id="ENSBTAT00000016976.6">
    <property type="protein sequence ID" value="ENSBTAP00000016976.4"/>
    <property type="gene ID" value="ENSBTAG00000012774.6"/>
</dbReference>
<dbReference type="GeneID" id="538050"/>
<dbReference type="KEGG" id="bta:538050"/>
<dbReference type="CTD" id="338382"/>
<dbReference type="VEuPathDB" id="HostDB:ENSBTAG00000012774"/>
<dbReference type="VGNC" id="VGNC:33661">
    <property type="gene designation" value="RAB7B"/>
</dbReference>
<dbReference type="eggNOG" id="KOG0394">
    <property type="taxonomic scope" value="Eukaryota"/>
</dbReference>
<dbReference type="GeneTree" id="ENSGT00940000161943"/>
<dbReference type="HOGENOM" id="CLU_041217_10_6_1"/>
<dbReference type="InParanoid" id="Q08DE8"/>
<dbReference type="OMA" id="MQIWDTG"/>
<dbReference type="OrthoDB" id="1436450at2759"/>
<dbReference type="TreeFam" id="TF326442"/>
<dbReference type="Reactome" id="R-BTA-8854214">
    <property type="pathway name" value="TBC/RABGAPs"/>
</dbReference>
<dbReference type="Reactome" id="R-BTA-8873719">
    <property type="pathway name" value="RAB geranylgeranylation"/>
</dbReference>
<dbReference type="Reactome" id="R-BTA-8876198">
    <property type="pathway name" value="RAB GEFs exchange GTP for GDP on RABs"/>
</dbReference>
<dbReference type="Proteomes" id="UP000009136">
    <property type="component" value="Chromosome 16"/>
</dbReference>
<dbReference type="Bgee" id="ENSBTAG00000012774">
    <property type="expression patterns" value="Expressed in bone marrow and 102 other cell types or tissues"/>
</dbReference>
<dbReference type="GO" id="GO:0005794">
    <property type="term" value="C:Golgi apparatus"/>
    <property type="evidence" value="ECO:0000250"/>
    <property type="project" value="UniProtKB"/>
</dbReference>
<dbReference type="GO" id="GO:0005770">
    <property type="term" value="C:late endosome"/>
    <property type="evidence" value="ECO:0000250"/>
    <property type="project" value="UniProtKB"/>
</dbReference>
<dbReference type="GO" id="GO:0005764">
    <property type="term" value="C:lysosome"/>
    <property type="evidence" value="ECO:0000250"/>
    <property type="project" value="UniProtKB"/>
</dbReference>
<dbReference type="GO" id="GO:0045335">
    <property type="term" value="C:phagocytic vesicle"/>
    <property type="evidence" value="ECO:0000250"/>
    <property type="project" value="UniProtKB"/>
</dbReference>
<dbReference type="GO" id="GO:0030670">
    <property type="term" value="C:phagocytic vesicle membrane"/>
    <property type="evidence" value="ECO:0007669"/>
    <property type="project" value="UniProtKB-SubCell"/>
</dbReference>
<dbReference type="GO" id="GO:0005802">
    <property type="term" value="C:trans-Golgi network"/>
    <property type="evidence" value="ECO:0000250"/>
    <property type="project" value="UniProtKB"/>
</dbReference>
<dbReference type="GO" id="GO:0005525">
    <property type="term" value="F:GTP binding"/>
    <property type="evidence" value="ECO:0007669"/>
    <property type="project" value="UniProtKB-KW"/>
</dbReference>
<dbReference type="GO" id="GO:0003924">
    <property type="term" value="F:GTPase activity"/>
    <property type="evidence" value="ECO:0007669"/>
    <property type="project" value="InterPro"/>
</dbReference>
<dbReference type="GO" id="GO:0008333">
    <property type="term" value="P:endosome to lysosome transport"/>
    <property type="evidence" value="ECO:0000318"/>
    <property type="project" value="GO_Central"/>
</dbReference>
<dbReference type="GO" id="GO:0034499">
    <property type="term" value="P:late endosome to Golgi transport"/>
    <property type="evidence" value="ECO:0000250"/>
    <property type="project" value="UniProtKB"/>
</dbReference>
<dbReference type="GO" id="GO:0034144">
    <property type="term" value="P:negative regulation of toll-like receptor 4 signaling pathway"/>
    <property type="evidence" value="ECO:0000250"/>
    <property type="project" value="UniProtKB"/>
</dbReference>
<dbReference type="GO" id="GO:0034164">
    <property type="term" value="P:negative regulation of toll-like receptor 9 signaling pathway"/>
    <property type="evidence" value="ECO:0000250"/>
    <property type="project" value="UniProtKB"/>
</dbReference>
<dbReference type="GO" id="GO:0090385">
    <property type="term" value="P:phagosome-lysosome fusion"/>
    <property type="evidence" value="ECO:0000318"/>
    <property type="project" value="GO_Central"/>
</dbReference>
<dbReference type="GO" id="GO:0032755">
    <property type="term" value="P:positive regulation of interleukin-6 production"/>
    <property type="evidence" value="ECO:0000250"/>
    <property type="project" value="UniProtKB"/>
</dbReference>
<dbReference type="GO" id="GO:0045654">
    <property type="term" value="P:positive regulation of megakaryocyte differentiation"/>
    <property type="evidence" value="ECO:0000250"/>
    <property type="project" value="UniProtKB"/>
</dbReference>
<dbReference type="GO" id="GO:0051092">
    <property type="term" value="P:positive regulation of NF-kappaB transcription factor activity"/>
    <property type="evidence" value="ECO:0000250"/>
    <property type="project" value="UniProtKB"/>
</dbReference>
<dbReference type="GO" id="GO:0015031">
    <property type="term" value="P:protein transport"/>
    <property type="evidence" value="ECO:0007669"/>
    <property type="project" value="UniProtKB-KW"/>
</dbReference>
<dbReference type="CDD" id="cd00154">
    <property type="entry name" value="Rab"/>
    <property type="match status" value="1"/>
</dbReference>
<dbReference type="FunFam" id="3.40.50.300:FF:000751">
    <property type="entry name" value="Rab family GTPase, putative"/>
    <property type="match status" value="1"/>
</dbReference>
<dbReference type="Gene3D" id="3.40.50.300">
    <property type="entry name" value="P-loop containing nucleotide triphosphate hydrolases"/>
    <property type="match status" value="1"/>
</dbReference>
<dbReference type="InterPro" id="IPR027417">
    <property type="entry name" value="P-loop_NTPase"/>
</dbReference>
<dbReference type="InterPro" id="IPR005225">
    <property type="entry name" value="Small_GTP-bd"/>
</dbReference>
<dbReference type="InterPro" id="IPR001806">
    <property type="entry name" value="Small_GTPase"/>
</dbReference>
<dbReference type="NCBIfam" id="TIGR00231">
    <property type="entry name" value="small_GTP"/>
    <property type="match status" value="1"/>
</dbReference>
<dbReference type="PANTHER" id="PTHR47981">
    <property type="entry name" value="RAB FAMILY"/>
    <property type="match status" value="1"/>
</dbReference>
<dbReference type="PANTHER" id="PTHR47981:SF22">
    <property type="entry name" value="RAS-RELATED PROTEIN RAB-7B"/>
    <property type="match status" value="1"/>
</dbReference>
<dbReference type="Pfam" id="PF00071">
    <property type="entry name" value="Ras"/>
    <property type="match status" value="1"/>
</dbReference>
<dbReference type="PRINTS" id="PR00449">
    <property type="entry name" value="RASTRNSFRMNG"/>
</dbReference>
<dbReference type="SMART" id="SM00175">
    <property type="entry name" value="RAB"/>
    <property type="match status" value="1"/>
</dbReference>
<dbReference type="SMART" id="SM00176">
    <property type="entry name" value="RAN"/>
    <property type="match status" value="1"/>
</dbReference>
<dbReference type="SMART" id="SM00173">
    <property type="entry name" value="RAS"/>
    <property type="match status" value="1"/>
</dbReference>
<dbReference type="SMART" id="SM00174">
    <property type="entry name" value="RHO"/>
    <property type="match status" value="1"/>
</dbReference>
<dbReference type="SUPFAM" id="SSF52540">
    <property type="entry name" value="P-loop containing nucleoside triphosphate hydrolases"/>
    <property type="match status" value="1"/>
</dbReference>
<dbReference type="PROSITE" id="PS51419">
    <property type="entry name" value="RAB"/>
    <property type="match status" value="1"/>
</dbReference>
<protein>
    <recommendedName>
        <fullName>Ras-related protein Rab-7b</fullName>
    </recommendedName>
</protein>
<keyword id="KW-0968">Cytoplasmic vesicle</keyword>
<keyword id="KW-0967">Endosome</keyword>
<keyword id="KW-0333">Golgi apparatus</keyword>
<keyword id="KW-0342">GTP-binding</keyword>
<keyword id="KW-0449">Lipoprotein</keyword>
<keyword id="KW-0458">Lysosome</keyword>
<keyword id="KW-0472">Membrane</keyword>
<keyword id="KW-0547">Nucleotide-binding</keyword>
<keyword id="KW-0597">Phosphoprotein</keyword>
<keyword id="KW-0636">Prenylation</keyword>
<keyword id="KW-0653">Protein transport</keyword>
<keyword id="KW-1185">Reference proteome</keyword>
<keyword id="KW-0813">Transport</keyword>
<sequence length="200" mass="22751">MNPRKKVDLKLIIIGALGVGKTSLLHRYVHKTFYEDYQTTLGASILSKIIILEDTTLKLQIWDTGGQERFRSMVSTFYKGSDGCVLAFDVTDLESFEALETWRGDVLAKTIPMEQPYPMVVLGNKIDLEDRQVPQEVAQGWCKEKDIPYFEVSAKNDINVVQAFEMLASRALSRYRSILESYLTDSIKLSPEDQPKSRCC</sequence>